<sequence length="332" mass="35943">MGKIYASLKSIASYIPPTCISNVDFEKTLDTNDEWITKRTGIKTRYFALPSQQTSDLAYEAGKKAIERAGIEPKDIDAVIVATLSPDYLTMPSTACITSFKLGIENKAAFDISAACSGFVYLLSLAKSFIESGTYKQILIIGAEKTSSVLDFSDRSTCVLFGDGAGACVIGSTNDEKAAILGVNVSANGRYQDFLCTPRVHATFGATQAQEKQSFIQMKGNETFKVAVKTLVSEVKEILNTHHINPQDVSFFIPHQANLRIINAVGENLNFTPEQIVVSIQKYGNTSAASIPMAMNDLYEEKKLKYGDLMLLDALGGGLTWGSALVHFGGTN</sequence>
<reference key="1">
    <citation type="journal article" date="2003" name="Proc. Natl. Acad. Sci. U.S.A.">
        <title>The complete genome sequence of the carcinogenic bacterium Helicobacter hepaticus.</title>
        <authorList>
            <person name="Suerbaum S."/>
            <person name="Josenhans C."/>
            <person name="Sterzenbach T."/>
            <person name="Drescher B."/>
            <person name="Brandt P."/>
            <person name="Bell M."/>
            <person name="Droege M."/>
            <person name="Fartmann B."/>
            <person name="Fischer H.-P."/>
            <person name="Ge Z."/>
            <person name="Hoerster A."/>
            <person name="Holland R."/>
            <person name="Klein K."/>
            <person name="Koenig J."/>
            <person name="Macko L."/>
            <person name="Mendz G.L."/>
            <person name="Nyakatura G."/>
            <person name="Schauer D.B."/>
            <person name="Shen Z."/>
            <person name="Weber J."/>
            <person name="Frosch M."/>
            <person name="Fox J.G."/>
        </authorList>
    </citation>
    <scope>NUCLEOTIDE SEQUENCE [LARGE SCALE GENOMIC DNA]</scope>
    <source>
        <strain>ATCC 51449 / 3B1</strain>
    </source>
</reference>
<name>FABH_HELHP</name>
<organism>
    <name type="scientific">Helicobacter hepaticus (strain ATCC 51449 / 3B1)</name>
    <dbReference type="NCBI Taxonomy" id="235279"/>
    <lineage>
        <taxon>Bacteria</taxon>
        <taxon>Pseudomonadati</taxon>
        <taxon>Campylobacterota</taxon>
        <taxon>Epsilonproteobacteria</taxon>
        <taxon>Campylobacterales</taxon>
        <taxon>Helicobacteraceae</taxon>
        <taxon>Helicobacter</taxon>
    </lineage>
</organism>
<keyword id="KW-0012">Acyltransferase</keyword>
<keyword id="KW-0963">Cytoplasm</keyword>
<keyword id="KW-0275">Fatty acid biosynthesis</keyword>
<keyword id="KW-0276">Fatty acid metabolism</keyword>
<keyword id="KW-0444">Lipid biosynthesis</keyword>
<keyword id="KW-0443">Lipid metabolism</keyword>
<keyword id="KW-0511">Multifunctional enzyme</keyword>
<keyword id="KW-1185">Reference proteome</keyword>
<keyword id="KW-0808">Transferase</keyword>
<proteinExistence type="inferred from homology"/>
<accession>P59813</accession>
<gene>
    <name evidence="1" type="primary">fabH</name>
    <name type="ordered locus">HH_0681</name>
</gene>
<comment type="function">
    <text evidence="1">Catalyzes the condensation reaction of fatty acid synthesis by the addition to an acyl acceptor of two carbons from malonyl-ACP. Catalyzes the first condensation reaction which initiates fatty acid synthesis and may therefore play a role in governing the total rate of fatty acid production. Possesses both acetoacetyl-ACP synthase and acetyl transacylase activities. Its substrate specificity determines the biosynthesis of branched-chain and/or straight-chain of fatty acids.</text>
</comment>
<comment type="catalytic activity">
    <reaction evidence="1">
        <text>malonyl-[ACP] + acetyl-CoA + H(+) = 3-oxobutanoyl-[ACP] + CO2 + CoA</text>
        <dbReference type="Rhea" id="RHEA:12080"/>
        <dbReference type="Rhea" id="RHEA-COMP:9623"/>
        <dbReference type="Rhea" id="RHEA-COMP:9625"/>
        <dbReference type="ChEBI" id="CHEBI:15378"/>
        <dbReference type="ChEBI" id="CHEBI:16526"/>
        <dbReference type="ChEBI" id="CHEBI:57287"/>
        <dbReference type="ChEBI" id="CHEBI:57288"/>
        <dbReference type="ChEBI" id="CHEBI:78449"/>
        <dbReference type="ChEBI" id="CHEBI:78450"/>
        <dbReference type="EC" id="2.3.1.180"/>
    </reaction>
</comment>
<comment type="pathway">
    <text evidence="1">Lipid metabolism; fatty acid biosynthesis.</text>
</comment>
<comment type="subunit">
    <text evidence="1">Homodimer.</text>
</comment>
<comment type="subcellular location">
    <subcellularLocation>
        <location evidence="1">Cytoplasm</location>
    </subcellularLocation>
</comment>
<comment type="domain">
    <text evidence="1">The last Arg residue of the ACP-binding site is essential for the weak association between ACP/AcpP and FabH.</text>
</comment>
<comment type="similarity">
    <text evidence="1">Belongs to the thiolase-like superfamily. FabH family.</text>
</comment>
<feature type="chain" id="PRO_0000110433" description="Beta-ketoacyl-[acyl-carrier-protein] synthase III">
    <location>
        <begin position="1"/>
        <end position="332"/>
    </location>
</feature>
<feature type="region of interest" description="ACP-binding" evidence="1">
    <location>
        <begin position="256"/>
        <end position="260"/>
    </location>
</feature>
<feature type="active site" evidence="1">
    <location>
        <position position="116"/>
    </location>
</feature>
<feature type="active site" evidence="1">
    <location>
        <position position="255"/>
    </location>
</feature>
<feature type="active site" evidence="1">
    <location>
        <position position="285"/>
    </location>
</feature>
<dbReference type="EC" id="2.3.1.180" evidence="1"/>
<dbReference type="EMBL" id="AE017125">
    <property type="protein sequence ID" value="AAP77278.1"/>
    <property type="molecule type" value="Genomic_DNA"/>
</dbReference>
<dbReference type="RefSeq" id="WP_011115523.1">
    <property type="nucleotide sequence ID" value="NC_004917.1"/>
</dbReference>
<dbReference type="SMR" id="P59813"/>
<dbReference type="STRING" id="235279.HH_0681"/>
<dbReference type="KEGG" id="hhe:HH_0681"/>
<dbReference type="eggNOG" id="COG0332">
    <property type="taxonomic scope" value="Bacteria"/>
</dbReference>
<dbReference type="HOGENOM" id="CLU_039592_4_1_7"/>
<dbReference type="OrthoDB" id="9815506at2"/>
<dbReference type="UniPathway" id="UPA00094"/>
<dbReference type="Proteomes" id="UP000002495">
    <property type="component" value="Chromosome"/>
</dbReference>
<dbReference type="GO" id="GO:0005737">
    <property type="term" value="C:cytoplasm"/>
    <property type="evidence" value="ECO:0007669"/>
    <property type="project" value="UniProtKB-SubCell"/>
</dbReference>
<dbReference type="GO" id="GO:0004315">
    <property type="term" value="F:3-oxoacyl-[acyl-carrier-protein] synthase activity"/>
    <property type="evidence" value="ECO:0007669"/>
    <property type="project" value="InterPro"/>
</dbReference>
<dbReference type="GO" id="GO:0033818">
    <property type="term" value="F:beta-ketoacyl-acyl-carrier-protein synthase III activity"/>
    <property type="evidence" value="ECO:0007669"/>
    <property type="project" value="UniProtKB-UniRule"/>
</dbReference>
<dbReference type="GO" id="GO:0006633">
    <property type="term" value="P:fatty acid biosynthetic process"/>
    <property type="evidence" value="ECO:0007669"/>
    <property type="project" value="UniProtKB-UniRule"/>
</dbReference>
<dbReference type="GO" id="GO:0044550">
    <property type="term" value="P:secondary metabolite biosynthetic process"/>
    <property type="evidence" value="ECO:0007669"/>
    <property type="project" value="TreeGrafter"/>
</dbReference>
<dbReference type="CDD" id="cd00830">
    <property type="entry name" value="KAS_III"/>
    <property type="match status" value="1"/>
</dbReference>
<dbReference type="FunFam" id="3.40.47.10:FF:000004">
    <property type="entry name" value="3-oxoacyl-[acyl-carrier-protein] synthase 3"/>
    <property type="match status" value="1"/>
</dbReference>
<dbReference type="Gene3D" id="3.40.47.10">
    <property type="match status" value="1"/>
</dbReference>
<dbReference type="HAMAP" id="MF_01815">
    <property type="entry name" value="FabH"/>
    <property type="match status" value="1"/>
</dbReference>
<dbReference type="InterPro" id="IPR013747">
    <property type="entry name" value="ACP_syn_III_C"/>
</dbReference>
<dbReference type="InterPro" id="IPR013751">
    <property type="entry name" value="ACP_syn_III_N"/>
</dbReference>
<dbReference type="InterPro" id="IPR004655">
    <property type="entry name" value="FabH"/>
</dbReference>
<dbReference type="InterPro" id="IPR016039">
    <property type="entry name" value="Thiolase-like"/>
</dbReference>
<dbReference type="NCBIfam" id="TIGR00747">
    <property type="entry name" value="fabH"/>
    <property type="match status" value="1"/>
</dbReference>
<dbReference type="NCBIfam" id="NF006829">
    <property type="entry name" value="PRK09352.1"/>
    <property type="match status" value="1"/>
</dbReference>
<dbReference type="PANTHER" id="PTHR34069">
    <property type="entry name" value="3-OXOACYL-[ACYL-CARRIER-PROTEIN] SYNTHASE 3"/>
    <property type="match status" value="1"/>
</dbReference>
<dbReference type="PANTHER" id="PTHR34069:SF2">
    <property type="entry name" value="BETA-KETOACYL-[ACYL-CARRIER-PROTEIN] SYNTHASE III"/>
    <property type="match status" value="1"/>
</dbReference>
<dbReference type="Pfam" id="PF08545">
    <property type="entry name" value="ACP_syn_III"/>
    <property type="match status" value="1"/>
</dbReference>
<dbReference type="Pfam" id="PF08541">
    <property type="entry name" value="ACP_syn_III_C"/>
    <property type="match status" value="1"/>
</dbReference>
<dbReference type="SUPFAM" id="SSF53901">
    <property type="entry name" value="Thiolase-like"/>
    <property type="match status" value="1"/>
</dbReference>
<evidence type="ECO:0000255" key="1">
    <source>
        <dbReference type="HAMAP-Rule" id="MF_01815"/>
    </source>
</evidence>
<protein>
    <recommendedName>
        <fullName evidence="1">Beta-ketoacyl-[acyl-carrier-protein] synthase III</fullName>
        <shortName evidence="1">Beta-ketoacyl-ACP synthase III</shortName>
        <shortName evidence="1">KAS III</shortName>
        <ecNumber evidence="1">2.3.1.180</ecNumber>
    </recommendedName>
    <alternativeName>
        <fullName evidence="1">3-oxoacyl-[acyl-carrier-protein] synthase 3</fullName>
    </alternativeName>
    <alternativeName>
        <fullName evidence="1">3-oxoacyl-[acyl-carrier-protein] synthase III</fullName>
    </alternativeName>
</protein>